<protein>
    <recommendedName>
        <fullName evidence="1">Large ribosomal subunit protein bL21</fullName>
    </recommendedName>
    <alternativeName>
        <fullName evidence="2">50S ribosomal protein L21</fullName>
    </alternativeName>
</protein>
<name>RL21_MESH7</name>
<gene>
    <name evidence="1" type="primary">rplU</name>
    <name type="ordered locus">MHP7448_0131</name>
</gene>
<sequence>MFAIIKTGGRQLKVEKDQTIFVEKIDKNEGETITFTDILFINGKIGTPYVENASVTGIIEKQGKAKKIVVYRHNPKSTHKRKLGHRQLFTKVKITELKG</sequence>
<organism>
    <name type="scientific">Mesomycoplasma hyopneumoniae (strain 7448)</name>
    <name type="common">Mycoplasma hyopneumoniae</name>
    <dbReference type="NCBI Taxonomy" id="262722"/>
    <lineage>
        <taxon>Bacteria</taxon>
        <taxon>Bacillati</taxon>
        <taxon>Mycoplasmatota</taxon>
        <taxon>Mycoplasmoidales</taxon>
        <taxon>Metamycoplasmataceae</taxon>
        <taxon>Mesomycoplasma</taxon>
    </lineage>
</organism>
<accession>Q4A8N3</accession>
<reference key="1">
    <citation type="journal article" date="2005" name="J. Bacteriol.">
        <title>Swine and poultry pathogens: the complete genome sequences of two strains of Mycoplasma hyopneumoniae and a strain of Mycoplasma synoviae.</title>
        <authorList>
            <person name="Vasconcelos A.T.R."/>
            <person name="Ferreira H.B."/>
            <person name="Bizarro C.V."/>
            <person name="Bonatto S.L."/>
            <person name="Carvalho M.O."/>
            <person name="Pinto P.M."/>
            <person name="Almeida D.F."/>
            <person name="Almeida L.G.P."/>
            <person name="Almeida R."/>
            <person name="Alves-Junior L."/>
            <person name="Assuncao E.N."/>
            <person name="Azevedo V.A.C."/>
            <person name="Bogo M.R."/>
            <person name="Brigido M.M."/>
            <person name="Brocchi M."/>
            <person name="Burity H.A."/>
            <person name="Camargo A.A."/>
            <person name="Camargo S.S."/>
            <person name="Carepo M.S."/>
            <person name="Carraro D.M."/>
            <person name="de Mattos Cascardo J.C."/>
            <person name="Castro L.A."/>
            <person name="Cavalcanti G."/>
            <person name="Chemale G."/>
            <person name="Collevatti R.G."/>
            <person name="Cunha C.W."/>
            <person name="Dallagiovanna B."/>
            <person name="Dambros B.P."/>
            <person name="Dellagostin O.A."/>
            <person name="Falcao C."/>
            <person name="Fantinatti-Garboggini F."/>
            <person name="Felipe M.S.S."/>
            <person name="Fiorentin L."/>
            <person name="Franco G.R."/>
            <person name="Freitas N.S.A."/>
            <person name="Frias D."/>
            <person name="Grangeiro T.B."/>
            <person name="Grisard E.C."/>
            <person name="Guimaraes C.T."/>
            <person name="Hungria M."/>
            <person name="Jardim S.N."/>
            <person name="Krieger M.A."/>
            <person name="Laurino J.P."/>
            <person name="Lima L.F.A."/>
            <person name="Lopes M.I."/>
            <person name="Loreto E.L.S."/>
            <person name="Madeira H.M.F."/>
            <person name="Manfio G.P."/>
            <person name="Maranhao A.Q."/>
            <person name="Martinkovics C.T."/>
            <person name="Medeiros S.R.B."/>
            <person name="Moreira M.A.M."/>
            <person name="Neiva M."/>
            <person name="Ramalho-Neto C.E."/>
            <person name="Nicolas M.F."/>
            <person name="Oliveira S.C."/>
            <person name="Paixao R.F.C."/>
            <person name="Pedrosa F.O."/>
            <person name="Pena S.D.J."/>
            <person name="Pereira M."/>
            <person name="Pereira-Ferrari L."/>
            <person name="Piffer I."/>
            <person name="Pinto L.S."/>
            <person name="Potrich D.P."/>
            <person name="Salim A.C.M."/>
            <person name="Santos F.R."/>
            <person name="Schmitt R."/>
            <person name="Schneider M.P.C."/>
            <person name="Schrank A."/>
            <person name="Schrank I.S."/>
            <person name="Schuck A.F."/>
            <person name="Seuanez H.N."/>
            <person name="Silva D.W."/>
            <person name="Silva R."/>
            <person name="Silva S.C."/>
            <person name="Soares C.M.A."/>
            <person name="Souza K.R.L."/>
            <person name="Souza R.C."/>
            <person name="Staats C.C."/>
            <person name="Steffens M.B.R."/>
            <person name="Teixeira S.M.R."/>
            <person name="Urmenyi T.P."/>
            <person name="Vainstein M.H."/>
            <person name="Zuccherato L.W."/>
            <person name="Simpson A.J.G."/>
            <person name="Zaha A."/>
        </authorList>
    </citation>
    <scope>NUCLEOTIDE SEQUENCE [LARGE SCALE GENOMIC DNA]</scope>
    <source>
        <strain>7448</strain>
    </source>
</reference>
<proteinExistence type="inferred from homology"/>
<keyword id="KW-0687">Ribonucleoprotein</keyword>
<keyword id="KW-0689">Ribosomal protein</keyword>
<keyword id="KW-0694">RNA-binding</keyword>
<keyword id="KW-0699">rRNA-binding</keyword>
<feature type="chain" id="PRO_0000270690" description="Large ribosomal subunit protein bL21">
    <location>
        <begin position="1"/>
        <end position="99"/>
    </location>
</feature>
<evidence type="ECO:0000255" key="1">
    <source>
        <dbReference type="HAMAP-Rule" id="MF_01363"/>
    </source>
</evidence>
<evidence type="ECO:0000305" key="2"/>
<dbReference type="EMBL" id="AE017244">
    <property type="protein sequence ID" value="AAZ53506.1"/>
    <property type="molecule type" value="Genomic_DNA"/>
</dbReference>
<dbReference type="RefSeq" id="WP_011283930.1">
    <property type="nucleotide sequence ID" value="NC_007332.1"/>
</dbReference>
<dbReference type="SMR" id="Q4A8N3"/>
<dbReference type="GeneID" id="41334429"/>
<dbReference type="KEGG" id="mhp:MHP7448_0131"/>
<dbReference type="HOGENOM" id="CLU_061463_3_1_14"/>
<dbReference type="Proteomes" id="UP000000553">
    <property type="component" value="Chromosome"/>
</dbReference>
<dbReference type="GO" id="GO:0005737">
    <property type="term" value="C:cytoplasm"/>
    <property type="evidence" value="ECO:0007669"/>
    <property type="project" value="UniProtKB-ARBA"/>
</dbReference>
<dbReference type="GO" id="GO:1990904">
    <property type="term" value="C:ribonucleoprotein complex"/>
    <property type="evidence" value="ECO:0007669"/>
    <property type="project" value="UniProtKB-KW"/>
</dbReference>
<dbReference type="GO" id="GO:0005840">
    <property type="term" value="C:ribosome"/>
    <property type="evidence" value="ECO:0007669"/>
    <property type="project" value="UniProtKB-KW"/>
</dbReference>
<dbReference type="GO" id="GO:0019843">
    <property type="term" value="F:rRNA binding"/>
    <property type="evidence" value="ECO:0007669"/>
    <property type="project" value="UniProtKB-UniRule"/>
</dbReference>
<dbReference type="GO" id="GO:0003735">
    <property type="term" value="F:structural constituent of ribosome"/>
    <property type="evidence" value="ECO:0007669"/>
    <property type="project" value="InterPro"/>
</dbReference>
<dbReference type="GO" id="GO:0006412">
    <property type="term" value="P:translation"/>
    <property type="evidence" value="ECO:0007669"/>
    <property type="project" value="UniProtKB-UniRule"/>
</dbReference>
<dbReference type="HAMAP" id="MF_01363">
    <property type="entry name" value="Ribosomal_bL21"/>
    <property type="match status" value="1"/>
</dbReference>
<dbReference type="InterPro" id="IPR028909">
    <property type="entry name" value="bL21-like"/>
</dbReference>
<dbReference type="InterPro" id="IPR036164">
    <property type="entry name" value="bL21-like_sf"/>
</dbReference>
<dbReference type="InterPro" id="IPR001787">
    <property type="entry name" value="Ribosomal_bL21"/>
</dbReference>
<dbReference type="NCBIfam" id="TIGR00061">
    <property type="entry name" value="L21"/>
    <property type="match status" value="1"/>
</dbReference>
<dbReference type="PANTHER" id="PTHR21349">
    <property type="entry name" value="50S RIBOSOMAL PROTEIN L21"/>
    <property type="match status" value="1"/>
</dbReference>
<dbReference type="PANTHER" id="PTHR21349:SF0">
    <property type="entry name" value="LARGE RIBOSOMAL SUBUNIT PROTEIN BL21M"/>
    <property type="match status" value="1"/>
</dbReference>
<dbReference type="Pfam" id="PF00829">
    <property type="entry name" value="Ribosomal_L21p"/>
    <property type="match status" value="1"/>
</dbReference>
<dbReference type="SUPFAM" id="SSF141091">
    <property type="entry name" value="L21p-like"/>
    <property type="match status" value="1"/>
</dbReference>
<comment type="function">
    <text evidence="1">This protein binds to 23S rRNA in the presence of protein L20.</text>
</comment>
<comment type="subunit">
    <text evidence="1">Part of the 50S ribosomal subunit. Contacts protein L20.</text>
</comment>
<comment type="similarity">
    <text evidence="1">Belongs to the bacterial ribosomal protein bL21 family.</text>
</comment>